<gene>
    <name type="primary">SIX2</name>
</gene>
<feature type="chain" id="PRO_0000049297" description="Homeobox protein SIX2">
    <location>
        <begin position="1"/>
        <end position="291"/>
    </location>
</feature>
<feature type="DNA-binding region" description="Homeobox" evidence="2">
    <location>
        <begin position="124"/>
        <end position="183"/>
    </location>
</feature>
<feature type="region of interest" description="Disordered" evidence="3">
    <location>
        <begin position="168"/>
        <end position="279"/>
    </location>
</feature>
<feature type="compositionally biased region" description="Basic and acidic residues" evidence="3">
    <location>
        <begin position="179"/>
        <end position="190"/>
    </location>
</feature>
<feature type="compositionally biased region" description="Low complexity" evidence="3">
    <location>
        <begin position="224"/>
        <end position="233"/>
    </location>
</feature>
<feature type="compositionally biased region" description="Pro residues" evidence="3">
    <location>
        <begin position="249"/>
        <end position="259"/>
    </location>
</feature>
<feature type="sequence variant" id="VAR_071207" description="In a renal hypodysplasia patient; dbSNP:rs142188105." evidence="4">
    <original>L</original>
    <variation>F</variation>
    <location>
        <position position="43"/>
    </location>
</feature>
<feature type="sequence variant" id="VAR_071208" description="In a renal hypodysplasia patient; dbSNP:rs147806994." evidence="4">
    <original>P</original>
    <variation>L</variation>
    <location>
        <position position="241"/>
    </location>
</feature>
<feature type="sequence variant" id="VAR_071209" description="In a renal hypodysplasia patient; dbSNP:rs201675842." evidence="4">
    <original>D</original>
    <variation>N</variation>
    <location>
        <position position="276"/>
    </location>
</feature>
<organism>
    <name type="scientific">Homo sapiens</name>
    <name type="common">Human</name>
    <dbReference type="NCBI Taxonomy" id="9606"/>
    <lineage>
        <taxon>Eukaryota</taxon>
        <taxon>Metazoa</taxon>
        <taxon>Chordata</taxon>
        <taxon>Craniata</taxon>
        <taxon>Vertebrata</taxon>
        <taxon>Euteleostomi</taxon>
        <taxon>Mammalia</taxon>
        <taxon>Eutheria</taxon>
        <taxon>Euarchontoglires</taxon>
        <taxon>Primates</taxon>
        <taxon>Haplorrhini</taxon>
        <taxon>Catarrhini</taxon>
        <taxon>Hominidae</taxon>
        <taxon>Homo</taxon>
    </lineage>
</organism>
<evidence type="ECO:0000250" key="1">
    <source>
        <dbReference type="UniProtKB" id="Q62232"/>
    </source>
</evidence>
<evidence type="ECO:0000255" key="2">
    <source>
        <dbReference type="PROSITE-ProRule" id="PRU00108"/>
    </source>
</evidence>
<evidence type="ECO:0000256" key="3">
    <source>
        <dbReference type="SAM" id="MobiDB-lite"/>
    </source>
</evidence>
<evidence type="ECO:0000269" key="4">
    <source>
    </source>
</evidence>
<evidence type="ECO:0000269" key="5">
    <source>
    </source>
</evidence>
<evidence type="ECO:0000269" key="6">
    <source>
    </source>
</evidence>
<evidence type="ECO:0000269" key="7">
    <source>
    </source>
</evidence>
<evidence type="ECO:0000305" key="8"/>
<comment type="function">
    <text evidence="1 7">Transcription factor that plays an important role in the development of several organs, including kidney, skull and stomach. During kidney development, maintains cap mesenchyme multipotent nephron progenitor cells in an undifferentiated state by opposing the inductive signals emanating from the ureteric bud and cooperates with WNT9B to promote renewing progenitor cells proliferation. Acts through its interaction with TCF7L2 and OSR1 in a canonical Wnt signaling independent manner preventing transcription of differentiation genes in cap mesenchyme such as WNT4. Also acts independently of OSR1 to activate expression of many cap mesenchyme genes, including itself, GDNF and OSR1. During craniofacial development plays a role in growth and elongation of the cranial base through regulation of chondrocyte differentiation. During stomach organogenesis, controls pyloric sphincter formation and mucosal growth through regulation of a gene network including NKX2-5, BMPR1B, BMP4, SOX9 and GREM1. During branchial arch development, acts to mediate HOXA2 control over the insulin-like growth factor pathway. May also be involved in limb tendon and ligament development (By similarity). Plays a role in cell proliferation and migration.</text>
</comment>
<comment type="subunit">
    <text evidence="1">Interacts with TCF7L2; in a canonical Wnt signaling independent manner; prevents transcription of differentiation genes in cap mesenchyme. Interacts with OSR1; form a strong repressor complex with TCF7L2, TLE2 and TLE3 to prevent the activation of Wnt/beta-catenin target genes in the cap mesenchyme. Interacts with HOXA11, EYA1 and EYA3.</text>
</comment>
<comment type="interaction">
    <interactant intactId="EBI-12695166">
        <id>Q9NPC8</id>
    </interactant>
    <interactant intactId="EBI-5655540">
        <id>Q8N3C7</id>
        <label>CLIP4</label>
    </interactant>
    <organismsDiffer>false</organismsDiffer>
    <experiments>3</experiments>
</comment>
<comment type="interaction">
    <interactant intactId="EBI-12695166">
        <id>Q9NPC8</id>
    </interactant>
    <interactant intactId="EBI-10826776">
        <id>Q04206-1</id>
        <label>RELA</label>
    </interactant>
    <organismsDiffer>false</organismsDiffer>
    <experiments>2</experiments>
</comment>
<comment type="interaction">
    <interactant intactId="EBI-12695166">
        <id>Q9NPC8</id>
    </interactant>
    <interactant intactId="EBI-12014388">
        <id>Q04726-4</id>
        <label>TLE3</label>
    </interactant>
    <organismsDiffer>false</organismsDiffer>
    <experiments>3</experiments>
</comment>
<comment type="interaction">
    <interactant intactId="EBI-12695166">
        <id>Q9NPC8</id>
    </interactant>
    <interactant intactId="EBI-11741437">
        <id>Q08117-2</id>
        <label>TLE5</label>
    </interactant>
    <organismsDiffer>false</organismsDiffer>
    <experiments>3</experiments>
</comment>
<comment type="subcellular location">
    <subcellularLocation>
        <location evidence="1">Nucleus</location>
    </subcellularLocation>
</comment>
<comment type="tissue specificity">
    <text evidence="6">Strongly expressed in skeletal muscle. Expressed in Wilms' tumor and in the cap mesenchyme of fetal kidney (at protein level).</text>
</comment>
<comment type="developmental stage">
    <text evidence="5">Found at 48 dpc in the anterior cranial base with detection concentrated in the sphenoid precursor. Expression is also detected in the pituitary gland.</text>
</comment>
<comment type="similarity">
    <text evidence="8">Belongs to the SIX/Sine oculis homeobox family.</text>
</comment>
<name>SIX2_HUMAN</name>
<keyword id="KW-0217">Developmental protein</keyword>
<keyword id="KW-0238">DNA-binding</keyword>
<keyword id="KW-0371">Homeobox</keyword>
<keyword id="KW-0539">Nucleus</keyword>
<keyword id="KW-1267">Proteomics identification</keyword>
<keyword id="KW-1185">Reference proteome</keyword>
<accession>Q9NPC8</accession>
<accession>Q9BXH7</accession>
<proteinExistence type="evidence at protein level"/>
<protein>
    <recommendedName>
        <fullName>Homeobox protein SIX2</fullName>
    </recommendedName>
    <alternativeName>
        <fullName>Sine oculis homeobox homolog 2</fullName>
    </alternativeName>
</protein>
<reference key="1">
    <citation type="journal article" date="2000" name="Am. J. Hum. Genet.">
        <title>Familial syndromic esophageal atresia maps to 2p23-p24.</title>
        <authorList>
            <person name="Celli J."/>
            <person name="Van Beusekom E."/>
            <person name="Hennekam R.C.M."/>
            <person name="Gallardo M.E."/>
            <person name="Smeets D.F.C.M."/>
            <person name="Rodriguez de Cordoba S."/>
            <person name="Innis J.W."/>
            <person name="Frydman M."/>
            <person name="Konig R."/>
            <person name="Kingston H."/>
            <person name="Tolmie J."/>
            <person name="Lutgarde L.C.P."/>
            <person name="van Bokhoven H."/>
            <person name="Brunner H.G."/>
        </authorList>
    </citation>
    <scope>NUCLEOTIDE SEQUENCE [GENOMIC DNA]</scope>
</reference>
<reference key="2">
    <citation type="journal article" date="2000" name="Gene">
        <title>Structure, mapping and expression of the human gene encoding the homeodomain protein, SIX2.</title>
        <authorList>
            <person name="Boucher C.A."/>
            <person name="Winchester C.L."/>
            <person name="Hamilton G.M."/>
            <person name="Winter A.D."/>
            <person name="Johnson K.J."/>
            <person name="Bailey M.E.S."/>
        </authorList>
    </citation>
    <scope>NUCLEOTIDE SEQUENCE [GENOMIC DNA / MRNA]</scope>
</reference>
<reference key="3">
    <citation type="submission" date="2000-12" db="EMBL/GenBank/DDBJ databases">
        <title>Molecular characterization of the human SIX2 gene: alternative polyadenylation and localization within the HPE2 critical region 2p21.</title>
        <authorList>
            <person name="Hedrich K."/>
            <person name="Hehr A.J."/>
            <person name="Hansmann I."/>
            <person name="Hehr U."/>
        </authorList>
    </citation>
    <scope>NUCLEOTIDE SEQUENCE [GENOMIC DNA / MRNA]</scope>
    <source>
        <tissue>Salivary gland</tissue>
    </source>
</reference>
<reference key="4">
    <citation type="submission" date="2003-05" db="EMBL/GenBank/DDBJ databases">
        <title>Cloning of human full-length CDSs in BD Creator(TM) system donor vector.</title>
        <authorList>
            <person name="Kalnine N."/>
            <person name="Chen X."/>
            <person name="Rolfs A."/>
            <person name="Halleck A."/>
            <person name="Hines L."/>
            <person name="Eisenstein S."/>
            <person name="Koundinya M."/>
            <person name="Raphael J."/>
            <person name="Moreira D."/>
            <person name="Kelley T."/>
            <person name="LaBaer J."/>
            <person name="Lin Y."/>
            <person name="Phelan M."/>
            <person name="Farmer A."/>
        </authorList>
    </citation>
    <scope>NUCLEOTIDE SEQUENCE [LARGE SCALE MRNA]</scope>
</reference>
<reference key="5">
    <citation type="journal article" date="2010" name="Dev. Biol.">
        <title>Inactivation of Six2 in mouse identifies a novel genetic mechanism controlling development and growth of the cranial base.</title>
        <authorList>
            <person name="He G."/>
            <person name="Tavella S."/>
            <person name="Hanley K.P."/>
            <person name="Self M."/>
            <person name="Oliver G."/>
            <person name="Grifone R."/>
            <person name="Hanley N."/>
            <person name="Ward C."/>
            <person name="Bobola N."/>
        </authorList>
    </citation>
    <scope>DEVELOPMENTAL STAGE</scope>
</reference>
<reference key="6">
    <citation type="journal article" date="2012" name="J. Pediatr. Surg.">
        <title>SIX2 and CITED1, markers of nephronic progenitor self-renewal, remain active in primitive elements of Wilms' tumor.</title>
        <authorList>
            <person name="Murphy A.J."/>
            <person name="Pierce J."/>
            <person name="de Caestecker C."/>
            <person name="Taylor C."/>
            <person name="Anderson J.R."/>
            <person name="Perantoni A.O."/>
            <person name="de Caestecker M.P."/>
            <person name="Lovvorn H.N. III"/>
        </authorList>
    </citation>
    <scope>TISSUE SPECIFICITY</scope>
</reference>
<reference key="7">
    <citation type="journal article" date="2013" name="Hum. Pathol.">
        <title>The pluripotent renal stem cell regulator SIX2 is activated in renal neoplasms and influences cellular proliferation and migration.</title>
        <authorList>
            <person name="Senanayake U."/>
            <person name="Koller K."/>
            <person name="Pichler M."/>
            <person name="Leuschner I."/>
            <person name="Strohmaier H."/>
            <person name="Hadler U."/>
            <person name="Das S."/>
            <person name="Hoefler G."/>
            <person name="Guertl B."/>
        </authorList>
    </citation>
    <scope>FUNCTION IN CELL MIGRATION AND CELL PROLIFERATION</scope>
</reference>
<reference key="8">
    <citation type="journal article" date="2008" name="J. Am. Soc. Nephrol.">
        <title>SIX2 and BMP4 mutations associate with anomalous kidney development.</title>
        <authorList>
            <person name="Weber S."/>
            <person name="Taylor J.C."/>
            <person name="Winyard P."/>
            <person name="Baker K.F."/>
            <person name="Sullivan-Brown J."/>
            <person name="Schild R."/>
            <person name="Knueppel T."/>
            <person name="Zurowska A.M."/>
            <person name="Caldas-Alfonso A."/>
            <person name="Litwin M."/>
            <person name="Emre S."/>
            <person name="Ghiggeri G.M."/>
            <person name="Bakkaloglu A."/>
            <person name="Mehls O."/>
            <person name="Antignac C."/>
            <person name="Schaefer F."/>
            <person name="Burdine R.D."/>
        </authorList>
    </citation>
    <scope>VARIANTS PHE-43; LEU-241 AND ASN-276</scope>
</reference>
<sequence length="291" mass="32286">MSMLPTFGFTQEQVACVCEVLQQGGNIERLGRFLWSLPACEHLHKNESVLKAKAVVAFHRGNFRELYKILESHQFSPHNHAKLQQLWLKAHYIEAEKLRGRPLGAVGKYRVRRKFPLPRSIWDGEETSYCFKEKSRSVLREWYAHNPYPSPREKRELAEATGLTTTQVSNWFKNRRQRDRAAEAKERENNENSNSNSHNPLNGSGKSVLGSSEDEKTPSGTPDHSSSSPALLLSPPPPGLPSLHSLGHPPGPSAVPVPVPGGGGADPLQHHHGLQDSILNPMSANLVDLGS</sequence>
<dbReference type="EMBL" id="AF136939">
    <property type="protein sequence ID" value="AAF69031.1"/>
    <property type="molecule type" value="Genomic_DNA"/>
</dbReference>
<dbReference type="EMBL" id="AF136940">
    <property type="protein sequence ID" value="AAF69032.1"/>
    <property type="molecule type" value="mRNA"/>
</dbReference>
<dbReference type="EMBL" id="AF332196">
    <property type="protein sequence ID" value="AAK16581.1"/>
    <property type="molecule type" value="mRNA"/>
</dbReference>
<dbReference type="EMBL" id="AF332197">
    <property type="protein sequence ID" value="AAK16582.1"/>
    <property type="molecule type" value="mRNA"/>
</dbReference>
<dbReference type="EMBL" id="AF332198">
    <property type="protein sequence ID" value="AAK16583.1"/>
    <property type="molecule type" value="Genomic_DNA"/>
</dbReference>
<dbReference type="EMBL" id="AF323498">
    <property type="protein sequence ID" value="AAK06773.1"/>
    <property type="molecule type" value="Genomic_DNA"/>
</dbReference>
<dbReference type="EMBL" id="BT020100">
    <property type="protein sequence ID" value="AAV38903.1"/>
    <property type="molecule type" value="mRNA"/>
</dbReference>
<dbReference type="CCDS" id="CCDS1822.1"/>
<dbReference type="RefSeq" id="NP_058628.3">
    <property type="nucleotide sequence ID" value="NM_016932.4"/>
</dbReference>
<dbReference type="SMR" id="Q9NPC8"/>
<dbReference type="BioGRID" id="115959">
    <property type="interactions" value="32"/>
</dbReference>
<dbReference type="CORUM" id="Q9NPC8"/>
<dbReference type="FunCoup" id="Q9NPC8">
    <property type="interactions" value="667"/>
</dbReference>
<dbReference type="IntAct" id="Q9NPC8">
    <property type="interactions" value="27"/>
</dbReference>
<dbReference type="MINT" id="Q9NPC8"/>
<dbReference type="STRING" id="9606.ENSP00000304502"/>
<dbReference type="GlyGen" id="Q9NPC8">
    <property type="glycosylation" value="1 site, 1 O-linked glycan (1 site)"/>
</dbReference>
<dbReference type="iPTMnet" id="Q9NPC8"/>
<dbReference type="PhosphoSitePlus" id="Q9NPC8"/>
<dbReference type="BioMuta" id="SIX2"/>
<dbReference type="DMDM" id="12230598"/>
<dbReference type="jPOST" id="Q9NPC8"/>
<dbReference type="MassIVE" id="Q9NPC8"/>
<dbReference type="PaxDb" id="9606-ENSP00000304502"/>
<dbReference type="PeptideAtlas" id="Q9NPC8"/>
<dbReference type="ProteomicsDB" id="81972"/>
<dbReference type="Pumba" id="Q9NPC8"/>
<dbReference type="Antibodypedia" id="29934">
    <property type="antibodies" value="192 antibodies from 31 providers"/>
</dbReference>
<dbReference type="DNASU" id="10736"/>
<dbReference type="Ensembl" id="ENST00000303077.7">
    <property type="protein sequence ID" value="ENSP00000304502.6"/>
    <property type="gene ID" value="ENSG00000170577.8"/>
</dbReference>
<dbReference type="GeneID" id="10736"/>
<dbReference type="KEGG" id="hsa:10736"/>
<dbReference type="MANE-Select" id="ENST00000303077.7">
    <property type="protein sequence ID" value="ENSP00000304502.6"/>
    <property type="RefSeq nucleotide sequence ID" value="NM_016932.5"/>
    <property type="RefSeq protein sequence ID" value="NP_058628.3"/>
</dbReference>
<dbReference type="UCSC" id="uc002ruo.4">
    <property type="organism name" value="human"/>
</dbReference>
<dbReference type="AGR" id="HGNC:10888"/>
<dbReference type="CTD" id="10736"/>
<dbReference type="DisGeNET" id="10736"/>
<dbReference type="GeneCards" id="SIX2"/>
<dbReference type="HGNC" id="HGNC:10888">
    <property type="gene designation" value="SIX2"/>
</dbReference>
<dbReference type="HPA" id="ENSG00000170577">
    <property type="expression patterns" value="Tissue enhanced (salivary gland, skeletal muscle)"/>
</dbReference>
<dbReference type="MalaCards" id="SIX2"/>
<dbReference type="MIM" id="604994">
    <property type="type" value="gene"/>
</dbReference>
<dbReference type="neXtProt" id="NX_Q9NPC8"/>
<dbReference type="OpenTargets" id="ENSG00000170577"/>
<dbReference type="Orphanet" id="488437">
    <property type="disease" value="SIX2-related frontonasal dysplasia"/>
</dbReference>
<dbReference type="PharmGKB" id="PA35788"/>
<dbReference type="VEuPathDB" id="HostDB:ENSG00000170577"/>
<dbReference type="eggNOG" id="KOG0775">
    <property type="taxonomic scope" value="Eukaryota"/>
</dbReference>
<dbReference type="GeneTree" id="ENSGT00940000158292"/>
<dbReference type="HOGENOM" id="CLU_046914_2_0_1"/>
<dbReference type="InParanoid" id="Q9NPC8"/>
<dbReference type="OMA" id="IHHHALQ"/>
<dbReference type="OrthoDB" id="3501850at2759"/>
<dbReference type="PAN-GO" id="Q9NPC8">
    <property type="GO annotations" value="6 GO annotations based on evolutionary models"/>
</dbReference>
<dbReference type="PhylomeDB" id="Q9NPC8"/>
<dbReference type="TreeFam" id="TF315545"/>
<dbReference type="PathwayCommons" id="Q9NPC8"/>
<dbReference type="Reactome" id="R-HSA-9830674">
    <property type="pathway name" value="Formation of the ureteric bud"/>
</dbReference>
<dbReference type="SignaLink" id="Q9NPC8"/>
<dbReference type="BioGRID-ORCS" id="10736">
    <property type="hits" value="19 hits in 1174 CRISPR screens"/>
</dbReference>
<dbReference type="ChiTaRS" id="SIX2">
    <property type="organism name" value="human"/>
</dbReference>
<dbReference type="GeneWiki" id="SIX2"/>
<dbReference type="GenomeRNAi" id="10736"/>
<dbReference type="Pharos" id="Q9NPC8">
    <property type="development level" value="Tbio"/>
</dbReference>
<dbReference type="PRO" id="PR:Q9NPC8"/>
<dbReference type="Proteomes" id="UP000005640">
    <property type="component" value="Chromosome 2"/>
</dbReference>
<dbReference type="RNAct" id="Q9NPC8">
    <property type="molecule type" value="protein"/>
</dbReference>
<dbReference type="Bgee" id="ENSG00000170577">
    <property type="expression patterns" value="Expressed in olfactory segment of nasal mucosa and 112 other cell types or tissues"/>
</dbReference>
<dbReference type="GO" id="GO:0000785">
    <property type="term" value="C:chromatin"/>
    <property type="evidence" value="ECO:0000247"/>
    <property type="project" value="NTNU_SB"/>
</dbReference>
<dbReference type="GO" id="GO:0005634">
    <property type="term" value="C:nucleus"/>
    <property type="evidence" value="ECO:0000318"/>
    <property type="project" value="GO_Central"/>
</dbReference>
<dbReference type="GO" id="GO:0005667">
    <property type="term" value="C:transcription regulator complex"/>
    <property type="evidence" value="ECO:0000318"/>
    <property type="project" value="GO_Central"/>
</dbReference>
<dbReference type="GO" id="GO:0001228">
    <property type="term" value="F:DNA-binding transcription activator activity, RNA polymerase II-specific"/>
    <property type="evidence" value="ECO:0007669"/>
    <property type="project" value="Ensembl"/>
</dbReference>
<dbReference type="GO" id="GO:0003700">
    <property type="term" value="F:DNA-binding transcription factor activity"/>
    <property type="evidence" value="ECO:0000303"/>
    <property type="project" value="ProtInc"/>
</dbReference>
<dbReference type="GO" id="GO:0000981">
    <property type="term" value="F:DNA-binding transcription factor activity, RNA polymerase II-specific"/>
    <property type="evidence" value="ECO:0000247"/>
    <property type="project" value="NTNU_SB"/>
</dbReference>
<dbReference type="GO" id="GO:0044877">
    <property type="term" value="F:protein-containing complex binding"/>
    <property type="evidence" value="ECO:0007669"/>
    <property type="project" value="Ensembl"/>
</dbReference>
<dbReference type="GO" id="GO:0000978">
    <property type="term" value="F:RNA polymerase II cis-regulatory region sequence-specific DNA binding"/>
    <property type="evidence" value="ECO:0000318"/>
    <property type="project" value="GO_Central"/>
</dbReference>
<dbReference type="GO" id="GO:1990837">
    <property type="term" value="F:sequence-specific double-stranded DNA binding"/>
    <property type="evidence" value="ECO:0000314"/>
    <property type="project" value="ARUK-UCL"/>
</dbReference>
<dbReference type="GO" id="GO:0009653">
    <property type="term" value="P:anatomical structure morphogenesis"/>
    <property type="evidence" value="ECO:0000304"/>
    <property type="project" value="ProtInc"/>
</dbReference>
<dbReference type="GO" id="GO:0009948">
    <property type="term" value="P:anterior/posterior axis specification"/>
    <property type="evidence" value="ECO:0000250"/>
    <property type="project" value="UniProtKB"/>
</dbReference>
<dbReference type="GO" id="GO:0016477">
    <property type="term" value="P:cell migration"/>
    <property type="evidence" value="ECO:0000314"/>
    <property type="project" value="UniProtKB"/>
</dbReference>
<dbReference type="GO" id="GO:0008283">
    <property type="term" value="P:cell population proliferation"/>
    <property type="evidence" value="ECO:0000314"/>
    <property type="project" value="UniProtKB"/>
</dbReference>
<dbReference type="GO" id="GO:0002062">
    <property type="term" value="P:chondrocyte differentiation"/>
    <property type="evidence" value="ECO:0007669"/>
    <property type="project" value="Ensembl"/>
</dbReference>
<dbReference type="GO" id="GO:0072137">
    <property type="term" value="P:condensed mesenchymal cell proliferation"/>
    <property type="evidence" value="ECO:0007669"/>
    <property type="project" value="Ensembl"/>
</dbReference>
<dbReference type="GO" id="GO:0048701">
    <property type="term" value="P:embryonic cranial skeleton morphogenesis"/>
    <property type="evidence" value="ECO:0007669"/>
    <property type="project" value="Ensembl"/>
</dbReference>
<dbReference type="GO" id="GO:0048557">
    <property type="term" value="P:embryonic digestive tract morphogenesis"/>
    <property type="evidence" value="ECO:0000250"/>
    <property type="project" value="UniProtKB"/>
</dbReference>
<dbReference type="GO" id="GO:0001822">
    <property type="term" value="P:kidney development"/>
    <property type="evidence" value="ECO:0000315"/>
    <property type="project" value="UniProtKB"/>
</dbReference>
<dbReference type="GO" id="GO:0072161">
    <property type="term" value="P:mesenchymal cell differentiation involved in kidney development"/>
    <property type="evidence" value="ECO:0000250"/>
    <property type="project" value="UniProtKB"/>
</dbReference>
<dbReference type="GO" id="GO:0072038">
    <property type="term" value="P:mesenchymal stem cell maintenance involved in nephron morphogenesis"/>
    <property type="evidence" value="ECO:0000250"/>
    <property type="project" value="UniProtKB"/>
</dbReference>
<dbReference type="GO" id="GO:0097168">
    <property type="term" value="P:mesenchymal stem cell proliferation"/>
    <property type="evidence" value="ECO:0000250"/>
    <property type="project" value="UniProtKB"/>
</dbReference>
<dbReference type="GO" id="GO:0003337">
    <property type="term" value="P:mesenchymal to epithelial transition involved in metanephros morphogenesis"/>
    <property type="evidence" value="ECO:0000250"/>
    <property type="project" value="UniProtKB"/>
</dbReference>
<dbReference type="GO" id="GO:0007501">
    <property type="term" value="P:mesodermal cell fate specification"/>
    <property type="evidence" value="ECO:0000250"/>
    <property type="project" value="UniProtKB"/>
</dbReference>
<dbReference type="GO" id="GO:0042474">
    <property type="term" value="P:middle ear morphogenesis"/>
    <property type="evidence" value="ECO:0007669"/>
    <property type="project" value="Ensembl"/>
</dbReference>
<dbReference type="GO" id="GO:0030857">
    <property type="term" value="P:negative regulation of epithelial cell differentiation"/>
    <property type="evidence" value="ECO:0007669"/>
    <property type="project" value="Ensembl"/>
</dbReference>
<dbReference type="GO" id="GO:0072006">
    <property type="term" value="P:nephron development"/>
    <property type="evidence" value="ECO:0000250"/>
    <property type="project" value="UniProtKB"/>
</dbReference>
<dbReference type="GO" id="GO:0072028">
    <property type="term" value="P:nephron morphogenesis"/>
    <property type="evidence" value="ECO:0000250"/>
    <property type="project" value="UniProtKB"/>
</dbReference>
<dbReference type="GO" id="GO:1902732">
    <property type="term" value="P:positive regulation of chondrocyte proliferation"/>
    <property type="evidence" value="ECO:0000250"/>
    <property type="project" value="UniProtKB"/>
</dbReference>
<dbReference type="GO" id="GO:0006606">
    <property type="term" value="P:protein import into nucleus"/>
    <property type="evidence" value="ECO:0007669"/>
    <property type="project" value="Ensembl"/>
</dbReference>
<dbReference type="GO" id="GO:0090189">
    <property type="term" value="P:regulation of branching involved in ureteric bud morphogenesis"/>
    <property type="evidence" value="ECO:0000250"/>
    <property type="project" value="UniProtKB"/>
</dbReference>
<dbReference type="GO" id="GO:0032330">
    <property type="term" value="P:regulation of chondrocyte differentiation"/>
    <property type="evidence" value="ECO:0007669"/>
    <property type="project" value="Ensembl"/>
</dbReference>
<dbReference type="GO" id="GO:0030278">
    <property type="term" value="P:regulation of ossification"/>
    <property type="evidence" value="ECO:0007669"/>
    <property type="project" value="Ensembl"/>
</dbReference>
<dbReference type="GO" id="GO:0006357">
    <property type="term" value="P:regulation of transcription by RNA polymerase II"/>
    <property type="evidence" value="ECO:0000318"/>
    <property type="project" value="GO_Central"/>
</dbReference>
<dbReference type="CDD" id="cd00086">
    <property type="entry name" value="homeodomain"/>
    <property type="match status" value="1"/>
</dbReference>
<dbReference type="FunFam" id="1.10.10.60:FF:000063">
    <property type="entry name" value="SIX homeobox 2"/>
    <property type="match status" value="1"/>
</dbReference>
<dbReference type="Gene3D" id="1.10.10.60">
    <property type="entry name" value="Homeodomain-like"/>
    <property type="match status" value="1"/>
</dbReference>
<dbReference type="InterPro" id="IPR001356">
    <property type="entry name" value="HD"/>
</dbReference>
<dbReference type="InterPro" id="IPR017970">
    <property type="entry name" value="Homeobox_CS"/>
</dbReference>
<dbReference type="InterPro" id="IPR009057">
    <property type="entry name" value="Homeodomain-like_sf"/>
</dbReference>
<dbReference type="InterPro" id="IPR031701">
    <property type="entry name" value="SIX1_SD"/>
</dbReference>
<dbReference type="PANTHER" id="PTHR10390">
    <property type="entry name" value="HOMEOBOX PROTEIN SIX"/>
    <property type="match status" value="1"/>
</dbReference>
<dbReference type="PANTHER" id="PTHR10390:SF61">
    <property type="entry name" value="HOMEOBOX PROTEIN SIX2"/>
    <property type="match status" value="1"/>
</dbReference>
<dbReference type="Pfam" id="PF00046">
    <property type="entry name" value="Homeodomain"/>
    <property type="match status" value="1"/>
</dbReference>
<dbReference type="Pfam" id="PF16878">
    <property type="entry name" value="SIX1_SD"/>
    <property type="match status" value="1"/>
</dbReference>
<dbReference type="SMART" id="SM00389">
    <property type="entry name" value="HOX"/>
    <property type="match status" value="1"/>
</dbReference>
<dbReference type="SUPFAM" id="SSF46689">
    <property type="entry name" value="Homeodomain-like"/>
    <property type="match status" value="1"/>
</dbReference>
<dbReference type="PROSITE" id="PS00027">
    <property type="entry name" value="HOMEOBOX_1"/>
    <property type="match status" value="1"/>
</dbReference>
<dbReference type="PROSITE" id="PS50071">
    <property type="entry name" value="HOMEOBOX_2"/>
    <property type="match status" value="1"/>
</dbReference>